<dbReference type="EC" id="3.4.19.-" evidence="2"/>
<dbReference type="EMBL" id="BT021737">
    <property type="protein sequence ID" value="AAX46584.1"/>
    <property type="molecule type" value="mRNA"/>
</dbReference>
<dbReference type="EMBL" id="BC142193">
    <property type="protein sequence ID" value="AAI42194.1"/>
    <property type="molecule type" value="mRNA"/>
</dbReference>
<dbReference type="RefSeq" id="NP_001069258.1">
    <molecule id="A5PJP6-2"/>
    <property type="nucleotide sequence ID" value="NM_001075790.2"/>
</dbReference>
<dbReference type="RefSeq" id="NP_001422372.1">
    <molecule id="A5PJP6-1"/>
    <property type="nucleotide sequence ID" value="NM_001435443.1"/>
</dbReference>
<dbReference type="RefSeq" id="XP_005227704.1">
    <property type="nucleotide sequence ID" value="XM_005227647.3"/>
</dbReference>
<dbReference type="RefSeq" id="XP_005227706.1">
    <property type="nucleotide sequence ID" value="XM_005227649.3"/>
</dbReference>
<dbReference type="SMR" id="A5PJP6"/>
<dbReference type="BioGRID" id="176131">
    <property type="interactions" value="1"/>
</dbReference>
<dbReference type="FunCoup" id="A5PJP6">
    <property type="interactions" value="2479"/>
</dbReference>
<dbReference type="STRING" id="9913.ENSBTAP00000010280"/>
<dbReference type="MEROPS" id="M67.004"/>
<dbReference type="PaxDb" id="9913-ENSBTAP00000010280"/>
<dbReference type="Ensembl" id="ENSBTAT00000010280.6">
    <molecule id="A5PJP6-1"/>
    <property type="protein sequence ID" value="ENSBTAP00000010280.5"/>
    <property type="gene ID" value="ENSBTAG00000007817.7"/>
</dbReference>
<dbReference type="GeneID" id="519513"/>
<dbReference type="KEGG" id="bta:519513"/>
<dbReference type="CTD" id="79184"/>
<dbReference type="VEuPathDB" id="HostDB:ENSBTAG00000007817"/>
<dbReference type="eggNOG" id="KOG1555">
    <property type="taxonomic scope" value="Eukaryota"/>
</dbReference>
<dbReference type="GeneTree" id="ENSGT00390000000360"/>
<dbReference type="InParanoid" id="A5PJP6"/>
<dbReference type="OMA" id="CIGEIDT"/>
<dbReference type="OrthoDB" id="446074at2759"/>
<dbReference type="Reactome" id="R-BTA-5689901">
    <property type="pathway name" value="Metalloprotease DUBs"/>
</dbReference>
<dbReference type="Reactome" id="R-BTA-5693565">
    <property type="pathway name" value="Recruitment and ATM-mediated phosphorylation of repair and signaling proteins at DNA double strand breaks"/>
</dbReference>
<dbReference type="Reactome" id="R-BTA-5693571">
    <property type="pathway name" value="Nonhomologous End-Joining (NHEJ)"/>
</dbReference>
<dbReference type="Reactome" id="R-BTA-5693607">
    <property type="pathway name" value="Processing of DNA double-strand break ends"/>
</dbReference>
<dbReference type="Reactome" id="R-BTA-69473">
    <property type="pathway name" value="G2/M DNA damage checkpoint"/>
</dbReference>
<dbReference type="Proteomes" id="UP000009136">
    <property type="component" value="Chromosome X"/>
</dbReference>
<dbReference type="Bgee" id="ENSBTAG00000007817">
    <property type="expression patterns" value="Expressed in liver and 108 other cell types or tissues"/>
</dbReference>
<dbReference type="GO" id="GO:0070531">
    <property type="term" value="C:BRCA1-A complex"/>
    <property type="evidence" value="ECO:0000250"/>
    <property type="project" value="UniProtKB"/>
</dbReference>
<dbReference type="GO" id="GO:0070552">
    <property type="term" value="C:BRISC complex"/>
    <property type="evidence" value="ECO:0000250"/>
    <property type="project" value="UniProtKB"/>
</dbReference>
<dbReference type="GO" id="GO:0005737">
    <property type="term" value="C:cytoplasm"/>
    <property type="evidence" value="ECO:0007669"/>
    <property type="project" value="UniProtKB-SubCell"/>
</dbReference>
<dbReference type="GO" id="GO:0000152">
    <property type="term" value="C:nuclear ubiquitin ligase complex"/>
    <property type="evidence" value="ECO:0007669"/>
    <property type="project" value="Ensembl"/>
</dbReference>
<dbReference type="GO" id="GO:0005654">
    <property type="term" value="C:nucleoplasm"/>
    <property type="evidence" value="ECO:0007669"/>
    <property type="project" value="Ensembl"/>
</dbReference>
<dbReference type="GO" id="GO:0005634">
    <property type="term" value="C:nucleus"/>
    <property type="evidence" value="ECO:0000250"/>
    <property type="project" value="UniProtKB"/>
</dbReference>
<dbReference type="GO" id="GO:0000922">
    <property type="term" value="C:spindle pole"/>
    <property type="evidence" value="ECO:0007669"/>
    <property type="project" value="UniProtKB-SubCell"/>
</dbReference>
<dbReference type="GO" id="GO:0004843">
    <property type="term" value="F:cysteine-type deubiquitinase activity"/>
    <property type="evidence" value="ECO:0007669"/>
    <property type="project" value="InterPro"/>
</dbReference>
<dbReference type="GO" id="GO:0030234">
    <property type="term" value="F:enzyme regulator activity"/>
    <property type="evidence" value="ECO:0007669"/>
    <property type="project" value="Ensembl"/>
</dbReference>
<dbReference type="GO" id="GO:0061578">
    <property type="term" value="F:K63-linked deubiquitinase activity"/>
    <property type="evidence" value="ECO:0007669"/>
    <property type="project" value="Ensembl"/>
</dbReference>
<dbReference type="GO" id="GO:0046872">
    <property type="term" value="F:metal ion binding"/>
    <property type="evidence" value="ECO:0007669"/>
    <property type="project" value="UniProtKB-KW"/>
</dbReference>
<dbReference type="GO" id="GO:0140492">
    <property type="term" value="F:metal-dependent deubiquitinase activity"/>
    <property type="evidence" value="ECO:0000250"/>
    <property type="project" value="UniProtKB"/>
</dbReference>
<dbReference type="GO" id="GO:0008237">
    <property type="term" value="F:metallopeptidase activity"/>
    <property type="evidence" value="ECO:0000250"/>
    <property type="project" value="UniProtKB"/>
</dbReference>
<dbReference type="GO" id="GO:0031593">
    <property type="term" value="F:polyubiquitin modification-dependent protein binding"/>
    <property type="evidence" value="ECO:0000250"/>
    <property type="project" value="UniProtKB"/>
</dbReference>
<dbReference type="GO" id="GO:0051301">
    <property type="term" value="P:cell division"/>
    <property type="evidence" value="ECO:0007669"/>
    <property type="project" value="UniProtKB-KW"/>
</dbReference>
<dbReference type="GO" id="GO:0071479">
    <property type="term" value="P:cellular response to ionizing radiation"/>
    <property type="evidence" value="ECO:0007669"/>
    <property type="project" value="Ensembl"/>
</dbReference>
<dbReference type="GO" id="GO:0006338">
    <property type="term" value="P:chromatin remodeling"/>
    <property type="evidence" value="ECO:0000250"/>
    <property type="project" value="UniProtKB"/>
</dbReference>
<dbReference type="GO" id="GO:0140861">
    <property type="term" value="P:DNA repair-dependent chromatin remodeling"/>
    <property type="evidence" value="ECO:0000250"/>
    <property type="project" value="UniProtKB"/>
</dbReference>
<dbReference type="GO" id="GO:0006302">
    <property type="term" value="P:double-strand break repair"/>
    <property type="evidence" value="ECO:0000250"/>
    <property type="project" value="UniProtKB"/>
</dbReference>
<dbReference type="GO" id="GO:0007095">
    <property type="term" value="P:mitotic G2 DNA damage checkpoint signaling"/>
    <property type="evidence" value="ECO:0000250"/>
    <property type="project" value="UniProtKB"/>
</dbReference>
<dbReference type="GO" id="GO:0045739">
    <property type="term" value="P:positive regulation of DNA repair"/>
    <property type="evidence" value="ECO:0000250"/>
    <property type="project" value="UniProtKB"/>
</dbReference>
<dbReference type="GO" id="GO:1900227">
    <property type="term" value="P:positive regulation of NLRP3 inflammasome complex assembly"/>
    <property type="evidence" value="ECO:0000250"/>
    <property type="project" value="UniProtKB"/>
</dbReference>
<dbReference type="GO" id="GO:0070536">
    <property type="term" value="P:protein K63-linked deubiquitination"/>
    <property type="evidence" value="ECO:0000250"/>
    <property type="project" value="UniProtKB"/>
</dbReference>
<dbReference type="GO" id="GO:0006508">
    <property type="term" value="P:proteolysis"/>
    <property type="evidence" value="ECO:0007669"/>
    <property type="project" value="UniProtKB-KW"/>
</dbReference>
<dbReference type="GO" id="GO:0010212">
    <property type="term" value="P:response to ionizing radiation"/>
    <property type="evidence" value="ECO:0000250"/>
    <property type="project" value="UniProtKB"/>
</dbReference>
<dbReference type="GO" id="GO:0010165">
    <property type="term" value="P:response to X-ray"/>
    <property type="evidence" value="ECO:0007669"/>
    <property type="project" value="Ensembl"/>
</dbReference>
<dbReference type="CDD" id="cd08068">
    <property type="entry name" value="MPN_BRCC36"/>
    <property type="match status" value="1"/>
</dbReference>
<dbReference type="FunFam" id="3.40.140.10:FF:000015">
    <property type="entry name" value="Lys-63-specific deubiquitinase BRCC36 isoform 3"/>
    <property type="match status" value="1"/>
</dbReference>
<dbReference type="Gene3D" id="3.40.140.10">
    <property type="entry name" value="Cytidine Deaminase, domain 2"/>
    <property type="match status" value="1"/>
</dbReference>
<dbReference type="InterPro" id="IPR040749">
    <property type="entry name" value="BRCC36_C"/>
</dbReference>
<dbReference type="InterPro" id="IPR000555">
    <property type="entry name" value="JAMM/MPN+_dom"/>
</dbReference>
<dbReference type="InterPro" id="IPR050242">
    <property type="entry name" value="JAMM_MPN+_peptidase_M67A"/>
</dbReference>
<dbReference type="InterPro" id="IPR037518">
    <property type="entry name" value="MPN"/>
</dbReference>
<dbReference type="InterPro" id="IPR033860">
    <property type="entry name" value="MPN_BRCC36"/>
</dbReference>
<dbReference type="PANTHER" id="PTHR10410">
    <property type="entry name" value="EUKARYOTIC TRANSLATION INITIATION FACTOR 3 -RELATED"/>
    <property type="match status" value="1"/>
</dbReference>
<dbReference type="Pfam" id="PF18110">
    <property type="entry name" value="BRCC36_C"/>
    <property type="match status" value="1"/>
</dbReference>
<dbReference type="Pfam" id="PF01398">
    <property type="entry name" value="JAB"/>
    <property type="match status" value="1"/>
</dbReference>
<dbReference type="SMART" id="SM00232">
    <property type="entry name" value="JAB_MPN"/>
    <property type="match status" value="1"/>
</dbReference>
<dbReference type="SUPFAM" id="SSF102712">
    <property type="entry name" value="JAB1/MPN domain"/>
    <property type="match status" value="1"/>
</dbReference>
<dbReference type="PROSITE" id="PS50249">
    <property type="entry name" value="MPN"/>
    <property type="match status" value="1"/>
</dbReference>
<name>BRCC3_BOVIN</name>
<comment type="function">
    <text evidence="2 3">Metalloprotease that specifically cleaves 'Lys-63'-linked polyubiquitin chains. Does not have activity toward 'Lys-48'-linked polyubiquitin chains. Component of the BRCA1-A complex, a complex that specifically recognizes 'Lys-63'-linked ubiquitinated histones H2A and H2AX at DNA lesions sites, leading to target the BRCA1-BARD1 heterodimer to sites of DNA damage at double-strand breaks (DSBs). In the BRCA1-A complex, it specifically removes 'Lys-63'-linked ubiquitin on histones H2A and H2AX, antagonizing the RNF8-dependent ubiquitination at double-strand breaks (DSBs). Catalytic subunit of the BRISC complex, a multiprotein complex that specifically cleaves 'Lys-63'-linked ubiquitin in various substrates. Mediates the specific 'Lys-63'-specific deubiquitination associated with the COP9 signalosome complex (CSN), via the interaction of the BRISC complex with the CSN complex. The BRISC complex is required for normal mitotic spindle assembly and microtubule attachment to kinetochores via its role in deubiquitinating NUMA1. Plays a role in interferon signaling via its role in the deubiquitination of the interferon receptor IFNAR1; deubiquitination increases IFNAR1 activity by enhancing its stability and cell surface expression (By similarity). Acts as a regulator of the NLRP3 inflammasome by mediating deubiquitination of NLRP3, leading to NLRP3 inflammasome assembly (By similarity). Down-regulates the response to bacterial lipopolysaccharide (LPS) via its role in IFNAR1 deubiquitination (By similarity). Deubiquitinates HDAC1 and PWWP2B leading to their stabilization (By similarity).</text>
</comment>
<comment type="cofactor">
    <cofactor evidence="1 2">
        <name>Zn(2+)</name>
        <dbReference type="ChEBI" id="CHEBI:29105"/>
    </cofactor>
    <text evidence="1">Binds 1 zinc ion per subunit.</text>
</comment>
<comment type="subunit">
    <text evidence="2 3">Component of the ARISC complex, at least composed of UIMC1/RAP80, ABRAXAS1, BRCC3/BRCC36, BABAM2 and BABAM1/NBA1. Component of the BRCA1-A complex, at least composed of BRCA1, BARD1, UIMC1/RAP80, ABRAXAS1, BRCC3/BRCC36, BABAM2 and BABAM1/NBA1. In the BRCA1-A complex, interacts directly with ABRAXAS1 and BABAM2. Component of the BRISC complex, at least composed of ABRAXAS2, BRCC3/BRCC36, BABAM2 and BABAM1/NBA1. Identified in a complex with SHMT2 and the other subunits of the BRISC complex. In the BRISC complex, interacts directly with ABRAXAS2. Identified in a complex with ABRAXAS2 and NUMA1. The BRISC complex interacts with the CSN complex. Component of the BRCA1/BRCA2 containing complex (BRCC), which also contains BRCA1, BRCA2, BARD1, BABAM2 and RAD51. BRCC is a ubiquitin E3 ligase complex that enhances cellular survival following DNA damage. Interacts with BRCA1. Binds polyubiquitin (By similarity). Interacts with PWWP2B (By similarity). Interacts with HDAC1; this interaction is enhanced in the presence of PWWP2B (By similarity).</text>
</comment>
<comment type="subcellular location">
    <subcellularLocation>
        <location evidence="2">Nucleus</location>
    </subcellularLocation>
    <subcellularLocation>
        <location evidence="2">Cytoplasm</location>
    </subcellularLocation>
    <subcellularLocation>
        <location evidence="2">Cytoplasm</location>
        <location evidence="2">Cytoskeleton</location>
        <location evidence="2">Spindle pole</location>
    </subcellularLocation>
    <text evidence="2">Localizes at sites of DNA damage at double-strand breaks (DSBs). Interaction with ABRAXAS2 retains BRCC3 in the cytoplasm.</text>
</comment>
<comment type="alternative products">
    <event type="alternative splicing"/>
    <isoform>
        <id>A5PJP6-1</id>
        <name>1</name>
        <sequence type="displayed"/>
    </isoform>
    <isoform>
        <id>A5PJP6-2</id>
        <name>2</name>
        <sequence type="described" ref="VSP_037283"/>
    </isoform>
</comment>
<comment type="similarity">
    <text evidence="6">Belongs to the peptidase M67A family. BRCC36 subfamily.</text>
</comment>
<evidence type="ECO:0000250" key="1">
    <source>
        <dbReference type="UniProtKB" id="E2AXC7"/>
    </source>
</evidence>
<evidence type="ECO:0000250" key="2">
    <source>
        <dbReference type="UniProtKB" id="P46736"/>
    </source>
</evidence>
<evidence type="ECO:0000250" key="3">
    <source>
        <dbReference type="UniProtKB" id="P46737"/>
    </source>
</evidence>
<evidence type="ECO:0000255" key="4">
    <source>
        <dbReference type="PROSITE-ProRule" id="PRU01182"/>
    </source>
</evidence>
<evidence type="ECO:0000303" key="5">
    <source>
    </source>
</evidence>
<evidence type="ECO:0000305" key="6"/>
<proteinExistence type="evidence at transcript level"/>
<accession>A5PJP6</accession>
<accession>Q58D60</accession>
<organism>
    <name type="scientific">Bos taurus</name>
    <name type="common">Bovine</name>
    <dbReference type="NCBI Taxonomy" id="9913"/>
    <lineage>
        <taxon>Eukaryota</taxon>
        <taxon>Metazoa</taxon>
        <taxon>Chordata</taxon>
        <taxon>Craniata</taxon>
        <taxon>Vertebrata</taxon>
        <taxon>Euteleostomi</taxon>
        <taxon>Mammalia</taxon>
        <taxon>Eutheria</taxon>
        <taxon>Laurasiatheria</taxon>
        <taxon>Artiodactyla</taxon>
        <taxon>Ruminantia</taxon>
        <taxon>Pecora</taxon>
        <taxon>Bovidae</taxon>
        <taxon>Bovinae</taxon>
        <taxon>Bos</taxon>
    </lineage>
</organism>
<reference key="1">
    <citation type="journal article" date="2005" name="BMC Genomics">
        <title>Characterization of 954 bovine full-CDS cDNA sequences.</title>
        <authorList>
            <person name="Harhay G.P."/>
            <person name="Sonstegard T.S."/>
            <person name="Keele J.W."/>
            <person name="Heaton M.P."/>
            <person name="Clawson M.L."/>
            <person name="Snelling W.M."/>
            <person name="Wiedmann R.T."/>
            <person name="Van Tassell C.P."/>
            <person name="Smith T.P.L."/>
        </authorList>
    </citation>
    <scope>NUCLEOTIDE SEQUENCE [LARGE SCALE MRNA] (ISOFORM 2)</scope>
</reference>
<reference key="2">
    <citation type="submission" date="2007-06" db="EMBL/GenBank/DDBJ databases">
        <authorList>
            <consortium name="NIH - Mammalian Gene Collection (MGC) project"/>
        </authorList>
    </citation>
    <scope>NUCLEOTIDE SEQUENCE [LARGE SCALE MRNA] (ISOFORM 1)</scope>
    <source>
        <strain>Hereford</strain>
        <tissue>Hypothalamus</tissue>
    </source>
</reference>
<protein>
    <recommendedName>
        <fullName>Lys-63-specific deubiquitinase BRCC36</fullName>
        <ecNumber evidence="2">3.4.19.-</ecNumber>
    </recommendedName>
    <alternativeName>
        <fullName>BRCA1-A complex subunit BRCC36</fullName>
    </alternativeName>
    <alternativeName>
        <fullName>BRCA1/BRCA2-containing complex subunit 3</fullName>
    </alternativeName>
    <alternativeName>
        <fullName>BRCA1/BRCA2-containing complex subunit 36</fullName>
    </alternativeName>
    <alternativeName>
        <fullName>BRISC complex subunit BRCC36</fullName>
    </alternativeName>
</protein>
<keyword id="KW-0007">Acetylation</keyword>
<keyword id="KW-0025">Alternative splicing</keyword>
<keyword id="KW-0131">Cell cycle</keyword>
<keyword id="KW-0132">Cell division</keyword>
<keyword id="KW-0156">Chromatin regulator</keyword>
<keyword id="KW-0963">Cytoplasm</keyword>
<keyword id="KW-0206">Cytoskeleton</keyword>
<keyword id="KW-0227">DNA damage</keyword>
<keyword id="KW-0234">DNA repair</keyword>
<keyword id="KW-0378">Hydrolase</keyword>
<keyword id="KW-0479">Metal-binding</keyword>
<keyword id="KW-0482">Metalloprotease</keyword>
<keyword id="KW-0498">Mitosis</keyword>
<keyword id="KW-0539">Nucleus</keyword>
<keyword id="KW-0597">Phosphoprotein</keyword>
<keyword id="KW-0645">Protease</keyword>
<keyword id="KW-1185">Reference proteome</keyword>
<keyword id="KW-0833">Ubl conjugation pathway</keyword>
<keyword id="KW-0862">Zinc</keyword>
<feature type="initiator methionine" description="Removed" evidence="2">
    <location>
        <position position="1"/>
    </location>
</feature>
<feature type="chain" id="PRO_0000373944" description="Lys-63-specific deubiquitinase BRCC36">
    <location>
        <begin position="2"/>
        <end position="316"/>
    </location>
</feature>
<feature type="domain" description="MPN" evidence="4">
    <location>
        <begin position="12"/>
        <end position="179"/>
    </location>
</feature>
<feature type="short sequence motif" description="JAMM motif" evidence="4">
    <location>
        <begin position="122"/>
        <end position="135"/>
    </location>
</feature>
<feature type="binding site" evidence="4">
    <location>
        <position position="122"/>
    </location>
    <ligand>
        <name>Zn(2+)</name>
        <dbReference type="ChEBI" id="CHEBI:29105"/>
        <note>catalytic</note>
    </ligand>
</feature>
<feature type="binding site" evidence="4">
    <location>
        <position position="124"/>
    </location>
    <ligand>
        <name>Zn(2+)</name>
        <dbReference type="ChEBI" id="CHEBI:29105"/>
        <note>catalytic</note>
    </ligand>
</feature>
<feature type="binding site" evidence="4">
    <location>
        <position position="135"/>
    </location>
    <ligand>
        <name>Zn(2+)</name>
        <dbReference type="ChEBI" id="CHEBI:29105"/>
        <note>catalytic</note>
    </ligand>
</feature>
<feature type="modified residue" description="N-acetylalanine" evidence="2">
    <location>
        <position position="2"/>
    </location>
</feature>
<feature type="modified residue" description="Phosphoserine" evidence="2">
    <location>
        <position position="258"/>
    </location>
</feature>
<feature type="splice variant" id="VSP_037283" description="In isoform 2." evidence="5">
    <location>
        <begin position="184"/>
        <end position="208"/>
    </location>
</feature>
<sequence>MAVQVVQAVQAVHLESDAFLVCLNHALSTEKEEVMGLCIGELNDDLRNDPKFTYTGTEMRTVAEKVDTVRIVHIHSVIILRRSDKRKDRVEISPEQLSAASTEAERLAELTGRPMRVVGWYHSHPHITVWPSHVDVRTQAMYQMMDQGFVGLIFSCFIEDKNTKTGRVLYTCFQSIQAQKSSESPRGPRDFWSSSQHISIEGQKEEERYERIEIPIHIVPHVTIGKVCLESAVELPKILCQEEQDAYRRIHSLTHLDSVTKIHNGSVFTKNLCSQMSAVSGPLLQWLEDRLEQNQQHVQELQQEKEELLQELSSLE</sequence>
<gene>
    <name type="primary">BRCC3</name>
    <name type="synonym">BRCC36</name>
</gene>